<gene>
    <name type="primary">trp3</name>
</gene>
<comment type="similarity">
    <text evidence="2">Belongs to the peptidase S1 family.</text>
</comment>
<comment type="caution">
    <text evidence="3">Has lost all three of the essential catalytic residues and so probably has no enzymatic activity.</text>
</comment>
<keyword id="KW-1015">Disulfide bond</keyword>
<keyword id="KW-0721">Serine protease homolog</keyword>
<keyword id="KW-0732">Signal</keyword>
<proteinExistence type="evidence at transcript level"/>
<reference key="1">
    <citation type="journal article" date="1998" name="J. Mar. Biotechnol.">
        <title>Isolation of cDNAs for trypsinogen from the winter flounder, Pleuronectes americanus.</title>
        <authorList>
            <person name="Douglas S.E."/>
            <person name="Gallant J.W."/>
        </authorList>
    </citation>
    <scope>NUCLEOTIDE SEQUENCE [MRNA]</scope>
    <source>
        <tissue>Intestine</tissue>
    </source>
</reference>
<organism>
    <name type="scientific">Pseudopleuronectes americanus</name>
    <name type="common">Winter flounder</name>
    <name type="synonym">Pleuronectes americanus</name>
    <dbReference type="NCBI Taxonomy" id="8265"/>
    <lineage>
        <taxon>Eukaryota</taxon>
        <taxon>Metazoa</taxon>
        <taxon>Chordata</taxon>
        <taxon>Craniata</taxon>
        <taxon>Vertebrata</taxon>
        <taxon>Euteleostomi</taxon>
        <taxon>Actinopterygii</taxon>
        <taxon>Neopterygii</taxon>
        <taxon>Teleostei</taxon>
        <taxon>Neoteleostei</taxon>
        <taxon>Acanthomorphata</taxon>
        <taxon>Carangaria</taxon>
        <taxon>Pleuronectiformes</taxon>
        <taxon>Pleuronectoidei</taxon>
        <taxon>Pleuronectidae</taxon>
        <taxon>Pseudopleuronectes</taxon>
    </lineage>
</organism>
<name>TRP3_PSEAM</name>
<protein>
    <recommendedName>
        <fullName>Trypsinogen-like protein 3</fullName>
    </recommendedName>
</protein>
<sequence>MILLLVLALGLAGASPLGEYKECPPHSRPWQVNLHDGKMSCSGALIDRWWIVTSFDCALTAHRTIATLGDHDLTVEEGTEQHIPVAEVIVHSPYRSPLHSLTMVRLAQPAQFNQHVQPVPLASRCPQPGEICSVSGWGSTRPNHFEPQQRLKCITVPVVDDQTCVNTFPQYLYWSQHMVCAGRADTDNCMSNRGSVMVCGGQLQGVQWFNHGCKDPAHPSVYSKMCLYNDWIHQVMARHPPFETTTVSTTTRGRKD</sequence>
<evidence type="ECO:0000255" key="1"/>
<evidence type="ECO:0000255" key="2">
    <source>
        <dbReference type="PROSITE-ProRule" id="PRU00274"/>
    </source>
</evidence>
<evidence type="ECO:0000305" key="3"/>
<feature type="signal peptide" evidence="1">
    <location>
        <begin position="1"/>
        <end position="14"/>
    </location>
</feature>
<feature type="chain" id="PRO_0000028448" description="Trypsinogen-like protein 3">
    <location>
        <begin position="15"/>
        <end position="256"/>
    </location>
</feature>
<feature type="domain" description="Peptidase S1" evidence="2">
    <location>
        <begin position="15"/>
        <end position="237"/>
    </location>
</feature>
<feature type="disulfide bond" evidence="2">
    <location>
        <begin position="23"/>
        <end position="153"/>
    </location>
</feature>
<feature type="disulfide bond" evidence="2">
    <location>
        <begin position="41"/>
        <end position="57"/>
    </location>
</feature>
<feature type="disulfide bond" evidence="2">
    <location>
        <begin position="125"/>
        <end position="226"/>
    </location>
</feature>
<feature type="disulfide bond" evidence="2">
    <location>
        <begin position="132"/>
        <end position="199"/>
    </location>
</feature>
<feature type="disulfide bond" evidence="2">
    <location>
        <begin position="164"/>
        <end position="180"/>
    </location>
</feature>
<feature type="disulfide bond" evidence="2">
    <location>
        <begin position="189"/>
        <end position="213"/>
    </location>
</feature>
<dbReference type="EMBL" id="AF012464">
    <property type="protein sequence ID" value="AAC32753.1"/>
    <property type="molecule type" value="mRNA"/>
</dbReference>
<dbReference type="SMR" id="O93267"/>
<dbReference type="GO" id="GO:0030141">
    <property type="term" value="C:secretory granule"/>
    <property type="evidence" value="ECO:0007669"/>
    <property type="project" value="TreeGrafter"/>
</dbReference>
<dbReference type="GO" id="GO:0004252">
    <property type="term" value="F:serine-type endopeptidase activity"/>
    <property type="evidence" value="ECO:0007669"/>
    <property type="project" value="InterPro"/>
</dbReference>
<dbReference type="GO" id="GO:0006508">
    <property type="term" value="P:proteolysis"/>
    <property type="evidence" value="ECO:0007669"/>
    <property type="project" value="InterPro"/>
</dbReference>
<dbReference type="CDD" id="cd00190">
    <property type="entry name" value="Tryp_SPc"/>
    <property type="match status" value="1"/>
</dbReference>
<dbReference type="FunFam" id="2.40.10.10:FF:000166">
    <property type="entry name" value="Trypsin"/>
    <property type="match status" value="1"/>
</dbReference>
<dbReference type="Gene3D" id="2.40.10.10">
    <property type="entry name" value="Trypsin-like serine proteases"/>
    <property type="match status" value="2"/>
</dbReference>
<dbReference type="InterPro" id="IPR009003">
    <property type="entry name" value="Peptidase_S1_PA"/>
</dbReference>
<dbReference type="InterPro" id="IPR043504">
    <property type="entry name" value="Peptidase_S1_PA_chymotrypsin"/>
</dbReference>
<dbReference type="InterPro" id="IPR001254">
    <property type="entry name" value="Trypsin_dom"/>
</dbReference>
<dbReference type="PANTHER" id="PTHR24271:SF47">
    <property type="entry name" value="KALLIKREIN-1"/>
    <property type="match status" value="1"/>
</dbReference>
<dbReference type="PANTHER" id="PTHR24271">
    <property type="entry name" value="KALLIKREIN-RELATED"/>
    <property type="match status" value="1"/>
</dbReference>
<dbReference type="Pfam" id="PF00089">
    <property type="entry name" value="Trypsin"/>
    <property type="match status" value="1"/>
</dbReference>
<dbReference type="SMART" id="SM00020">
    <property type="entry name" value="Tryp_SPc"/>
    <property type="match status" value="1"/>
</dbReference>
<dbReference type="SUPFAM" id="SSF50494">
    <property type="entry name" value="Trypsin-like serine proteases"/>
    <property type="match status" value="1"/>
</dbReference>
<dbReference type="PROSITE" id="PS50240">
    <property type="entry name" value="TRYPSIN_DOM"/>
    <property type="match status" value="1"/>
</dbReference>
<accession>O93267</accession>